<comment type="subcellular location">
    <subcellularLocation>
        <location evidence="1">Cell inner membrane</location>
        <topology evidence="1">Multi-pass membrane protein</topology>
    </subcellularLocation>
</comment>
<gene>
    <name type="primary">ybhQ</name>
    <name type="ordered locus">Z1010</name>
    <name type="ordered locus">ECs0869</name>
</gene>
<name>YBHQ_ECO57</name>
<reference key="1">
    <citation type="journal article" date="2001" name="Nature">
        <title>Genome sequence of enterohaemorrhagic Escherichia coli O157:H7.</title>
        <authorList>
            <person name="Perna N.T."/>
            <person name="Plunkett G. III"/>
            <person name="Burland V."/>
            <person name="Mau B."/>
            <person name="Glasner J.D."/>
            <person name="Rose D.J."/>
            <person name="Mayhew G.F."/>
            <person name="Evans P.S."/>
            <person name="Gregor J."/>
            <person name="Kirkpatrick H.A."/>
            <person name="Posfai G."/>
            <person name="Hackett J."/>
            <person name="Klink S."/>
            <person name="Boutin A."/>
            <person name="Shao Y."/>
            <person name="Miller L."/>
            <person name="Grotbeck E.J."/>
            <person name="Davis N.W."/>
            <person name="Lim A."/>
            <person name="Dimalanta E.T."/>
            <person name="Potamousis K."/>
            <person name="Apodaca J."/>
            <person name="Anantharaman T.S."/>
            <person name="Lin J."/>
            <person name="Yen G."/>
            <person name="Schwartz D.C."/>
            <person name="Welch R.A."/>
            <person name="Blattner F.R."/>
        </authorList>
    </citation>
    <scope>NUCLEOTIDE SEQUENCE [LARGE SCALE GENOMIC DNA]</scope>
    <source>
        <strain>O157:H7 / EDL933 / ATCC 700927 / EHEC</strain>
    </source>
</reference>
<reference key="2">
    <citation type="journal article" date="2001" name="DNA Res.">
        <title>Complete genome sequence of enterohemorrhagic Escherichia coli O157:H7 and genomic comparison with a laboratory strain K-12.</title>
        <authorList>
            <person name="Hayashi T."/>
            <person name="Makino K."/>
            <person name="Ohnishi M."/>
            <person name="Kurokawa K."/>
            <person name="Ishii K."/>
            <person name="Yokoyama K."/>
            <person name="Han C.-G."/>
            <person name="Ohtsubo E."/>
            <person name="Nakayama K."/>
            <person name="Murata T."/>
            <person name="Tanaka M."/>
            <person name="Tobe T."/>
            <person name="Iida T."/>
            <person name="Takami H."/>
            <person name="Honda T."/>
            <person name="Sasakawa C."/>
            <person name="Ogasawara N."/>
            <person name="Yasunaga T."/>
            <person name="Kuhara S."/>
            <person name="Shiba T."/>
            <person name="Hattori M."/>
            <person name="Shinagawa H."/>
        </authorList>
    </citation>
    <scope>NUCLEOTIDE SEQUENCE [LARGE SCALE GENOMIC DNA]</scope>
    <source>
        <strain>O157:H7 / Sakai / RIMD 0509952 / EHEC</strain>
    </source>
</reference>
<dbReference type="EMBL" id="AE005174">
    <property type="protein sequence ID" value="AAG55162.1"/>
    <property type="molecule type" value="Genomic_DNA"/>
</dbReference>
<dbReference type="EMBL" id="BA000007">
    <property type="protein sequence ID" value="BAB34292.1"/>
    <property type="molecule type" value="Genomic_DNA"/>
</dbReference>
<dbReference type="PIR" id="E90737">
    <property type="entry name" value="E90737"/>
</dbReference>
<dbReference type="PIR" id="F85587">
    <property type="entry name" value="F85587"/>
</dbReference>
<dbReference type="RefSeq" id="NP_308896.1">
    <property type="nucleotide sequence ID" value="NC_002695.1"/>
</dbReference>
<dbReference type="RefSeq" id="WP_000871982.1">
    <property type="nucleotide sequence ID" value="NZ_VOAI01000006.1"/>
</dbReference>
<dbReference type="STRING" id="155864.Z1010"/>
<dbReference type="GeneID" id="917607"/>
<dbReference type="KEGG" id="ece:Z1010"/>
<dbReference type="KEGG" id="ecs:ECs_0869"/>
<dbReference type="PATRIC" id="fig|386585.9.peg.983"/>
<dbReference type="eggNOG" id="ENOG502ZPQP">
    <property type="taxonomic scope" value="Bacteria"/>
</dbReference>
<dbReference type="HOGENOM" id="CLU_147415_0_0_6"/>
<dbReference type="OMA" id="SKHRVRH"/>
<dbReference type="Proteomes" id="UP000000558">
    <property type="component" value="Chromosome"/>
</dbReference>
<dbReference type="Proteomes" id="UP000002519">
    <property type="component" value="Chromosome"/>
</dbReference>
<dbReference type="GO" id="GO:0005886">
    <property type="term" value="C:plasma membrane"/>
    <property type="evidence" value="ECO:0007669"/>
    <property type="project" value="UniProtKB-SubCell"/>
</dbReference>
<dbReference type="InterPro" id="IPR021303">
    <property type="entry name" value="Uncharacterised_YbhQ"/>
</dbReference>
<dbReference type="Pfam" id="PF11076">
    <property type="entry name" value="YbhQ"/>
    <property type="match status" value="1"/>
</dbReference>
<accession>P0AAW7</accession>
<accession>P75773</accession>
<evidence type="ECO:0000250" key="1"/>
<evidence type="ECO:0000255" key="2"/>
<organism>
    <name type="scientific">Escherichia coli O157:H7</name>
    <dbReference type="NCBI Taxonomy" id="83334"/>
    <lineage>
        <taxon>Bacteria</taxon>
        <taxon>Pseudomonadati</taxon>
        <taxon>Pseudomonadota</taxon>
        <taxon>Gammaproteobacteria</taxon>
        <taxon>Enterobacterales</taxon>
        <taxon>Enterobacteriaceae</taxon>
        <taxon>Escherichia</taxon>
    </lineage>
</organism>
<feature type="chain" id="PRO_0000168721" description="Inner membrane protein YbhQ">
    <location>
        <begin position="1"/>
        <end position="136"/>
    </location>
</feature>
<feature type="topological domain" description="Cytoplasmic" evidence="2">
    <location>
        <begin position="1"/>
        <end position="12"/>
    </location>
</feature>
<feature type="transmembrane region" description="Helical" evidence="2">
    <location>
        <begin position="13"/>
        <end position="33"/>
    </location>
</feature>
<feature type="topological domain" description="Periplasmic" evidence="2">
    <location>
        <begin position="34"/>
        <end position="37"/>
    </location>
</feature>
<feature type="transmembrane region" description="Helical" evidence="2">
    <location>
        <begin position="38"/>
        <end position="58"/>
    </location>
</feature>
<feature type="topological domain" description="Cytoplasmic" evidence="2">
    <location>
        <begin position="59"/>
        <end position="71"/>
    </location>
</feature>
<feature type="transmembrane region" description="Helical" evidence="2">
    <location>
        <begin position="72"/>
        <end position="92"/>
    </location>
</feature>
<feature type="topological domain" description="Periplasmic" evidence="2">
    <location>
        <begin position="93"/>
        <end position="99"/>
    </location>
</feature>
<feature type="transmembrane region" description="Helical" evidence="2">
    <location>
        <begin position="100"/>
        <end position="120"/>
    </location>
</feature>
<feature type="topological domain" description="Cytoplasmic" evidence="2">
    <location>
        <begin position="121"/>
        <end position="136"/>
    </location>
</feature>
<keyword id="KW-0997">Cell inner membrane</keyword>
<keyword id="KW-1003">Cell membrane</keyword>
<keyword id="KW-0472">Membrane</keyword>
<keyword id="KW-1185">Reference proteome</keyword>
<keyword id="KW-0812">Transmembrane</keyword>
<keyword id="KW-1133">Transmembrane helix</keyword>
<proteinExistence type="inferred from homology"/>
<sequence>MKWQQRVRVATGLSCWQIMLHLLVVALLVVGWMSKTLVHVGVGLCALYCVTVVMMLVFQRHPEQRWREVADVLEELTTTWYFGAALIVLWLLSRVLENNFLLAIAGLAILAGPAVVSLLAKDKKLHHLTSKHRVRR</sequence>
<protein>
    <recommendedName>
        <fullName>Inner membrane protein YbhQ</fullName>
    </recommendedName>
</protein>